<geneLocation type="mitochondrion"/>
<proteinExistence type="evidence at protein level"/>
<accession>P03897</accession>
<organism>
    <name type="scientific">Homo sapiens</name>
    <name type="common">Human</name>
    <dbReference type="NCBI Taxonomy" id="9606"/>
    <lineage>
        <taxon>Eukaryota</taxon>
        <taxon>Metazoa</taxon>
        <taxon>Chordata</taxon>
        <taxon>Craniata</taxon>
        <taxon>Vertebrata</taxon>
        <taxon>Euteleostomi</taxon>
        <taxon>Mammalia</taxon>
        <taxon>Eutheria</taxon>
        <taxon>Euarchontoglires</taxon>
        <taxon>Primates</taxon>
        <taxon>Haplorrhini</taxon>
        <taxon>Catarrhini</taxon>
        <taxon>Hominidae</taxon>
        <taxon>Homo</taxon>
    </lineage>
</organism>
<sequence length="115" mass="13186">MNFALILMINTLLALLLMIITFWLPQLNGYMEKSTPYECGFDPMSPARVPFSMKFFLVAITFLLFDLEIALLLPLPWALQTTNLPLMVMSSLLLIIILALSLAYEWLQKGLDWTE</sequence>
<dbReference type="EC" id="7.1.1.2" evidence="9"/>
<dbReference type="EMBL" id="J01415">
    <property type="protein sequence ID" value="AAB58950.1"/>
    <property type="molecule type" value="Genomic_DNA"/>
</dbReference>
<dbReference type="EMBL" id="V00662">
    <property type="protein sequence ID" value="CAA24033.1"/>
    <property type="molecule type" value="Genomic_DNA"/>
</dbReference>
<dbReference type="EMBL" id="AY339402">
    <property type="protein sequence ID" value="AAP89043.1"/>
    <property type="molecule type" value="Genomic_DNA"/>
</dbReference>
<dbReference type="EMBL" id="AY339403">
    <property type="protein sequence ID" value="AAP89056.1"/>
    <property type="molecule type" value="Genomic_DNA"/>
</dbReference>
<dbReference type="EMBL" id="AY339404">
    <property type="protein sequence ID" value="AAP89069.1"/>
    <property type="molecule type" value="Genomic_DNA"/>
</dbReference>
<dbReference type="EMBL" id="AY339405">
    <property type="protein sequence ID" value="AAP89082.1"/>
    <property type="molecule type" value="Genomic_DNA"/>
</dbReference>
<dbReference type="EMBL" id="AY339406">
    <property type="protein sequence ID" value="AAP89095.1"/>
    <property type="molecule type" value="Genomic_DNA"/>
</dbReference>
<dbReference type="EMBL" id="AY339407">
    <property type="protein sequence ID" value="AAP89108.1"/>
    <property type="molecule type" value="Genomic_DNA"/>
</dbReference>
<dbReference type="EMBL" id="AY339408">
    <property type="protein sequence ID" value="AAP89121.1"/>
    <property type="molecule type" value="Genomic_DNA"/>
</dbReference>
<dbReference type="EMBL" id="AY339409">
    <property type="protein sequence ID" value="AAP89134.1"/>
    <property type="molecule type" value="Genomic_DNA"/>
</dbReference>
<dbReference type="EMBL" id="AY339410">
    <property type="protein sequence ID" value="AAP89147.1"/>
    <property type="molecule type" value="Genomic_DNA"/>
</dbReference>
<dbReference type="EMBL" id="AY339411">
    <property type="protein sequence ID" value="AAP89160.1"/>
    <property type="molecule type" value="Genomic_DNA"/>
</dbReference>
<dbReference type="EMBL" id="AY339412">
    <property type="protein sequence ID" value="AAP89173.1"/>
    <property type="molecule type" value="Genomic_DNA"/>
</dbReference>
<dbReference type="EMBL" id="AY339413">
    <property type="protein sequence ID" value="AAP89186.1"/>
    <property type="molecule type" value="Genomic_DNA"/>
</dbReference>
<dbReference type="EMBL" id="AY339414">
    <property type="protein sequence ID" value="AAP89199.1"/>
    <property type="molecule type" value="Genomic_DNA"/>
</dbReference>
<dbReference type="EMBL" id="AY339415">
    <property type="protein sequence ID" value="AAP89212.1"/>
    <property type="molecule type" value="Genomic_DNA"/>
</dbReference>
<dbReference type="EMBL" id="AY339416">
    <property type="protein sequence ID" value="AAP89225.1"/>
    <property type="molecule type" value="Genomic_DNA"/>
</dbReference>
<dbReference type="EMBL" id="AY339417">
    <property type="protein sequence ID" value="AAP89238.1"/>
    <property type="molecule type" value="Genomic_DNA"/>
</dbReference>
<dbReference type="EMBL" id="AY339418">
    <property type="protein sequence ID" value="AAP89251.1"/>
    <property type="molecule type" value="Genomic_DNA"/>
</dbReference>
<dbReference type="EMBL" id="AY339419">
    <property type="protein sequence ID" value="AAP89264.1"/>
    <property type="molecule type" value="Genomic_DNA"/>
</dbReference>
<dbReference type="EMBL" id="AY339420">
    <property type="protein sequence ID" value="AAP89277.1"/>
    <property type="molecule type" value="Genomic_DNA"/>
</dbReference>
<dbReference type="EMBL" id="AY339421">
    <property type="protein sequence ID" value="AAP89290.1"/>
    <property type="molecule type" value="Genomic_DNA"/>
</dbReference>
<dbReference type="EMBL" id="AY339422">
    <property type="protein sequence ID" value="AAP89303.1"/>
    <property type="molecule type" value="Genomic_DNA"/>
</dbReference>
<dbReference type="EMBL" id="AY339423">
    <property type="protein sequence ID" value="AAP89316.1"/>
    <property type="molecule type" value="Genomic_DNA"/>
</dbReference>
<dbReference type="EMBL" id="AY339424">
    <property type="protein sequence ID" value="AAP89329.1"/>
    <property type="molecule type" value="Genomic_DNA"/>
</dbReference>
<dbReference type="EMBL" id="AY339425">
    <property type="protein sequence ID" value="AAP89342.1"/>
    <property type="molecule type" value="Genomic_DNA"/>
</dbReference>
<dbReference type="EMBL" id="AY339426">
    <property type="protein sequence ID" value="AAP89355.1"/>
    <property type="molecule type" value="Genomic_DNA"/>
</dbReference>
<dbReference type="EMBL" id="AY339427">
    <property type="protein sequence ID" value="AAP89368.1"/>
    <property type="molecule type" value="Genomic_DNA"/>
</dbReference>
<dbReference type="EMBL" id="AY339428">
    <property type="protein sequence ID" value="AAP89381.1"/>
    <property type="molecule type" value="Genomic_DNA"/>
</dbReference>
<dbReference type="EMBL" id="AY339429">
    <property type="protein sequence ID" value="AAP89394.1"/>
    <property type="molecule type" value="Genomic_DNA"/>
</dbReference>
<dbReference type="EMBL" id="AY339430">
    <property type="protein sequence ID" value="AAP89407.1"/>
    <property type="molecule type" value="Genomic_DNA"/>
</dbReference>
<dbReference type="EMBL" id="AY339431">
    <property type="protein sequence ID" value="AAP89420.1"/>
    <property type="molecule type" value="Genomic_DNA"/>
</dbReference>
<dbReference type="EMBL" id="AY339432">
    <property type="protein sequence ID" value="AAP89433.1"/>
    <property type="molecule type" value="Genomic_DNA"/>
</dbReference>
<dbReference type="EMBL" id="AY339433">
    <property type="protein sequence ID" value="AAP89446.1"/>
    <property type="molecule type" value="Genomic_DNA"/>
</dbReference>
<dbReference type="EMBL" id="AY339434">
    <property type="protein sequence ID" value="AAP89459.1"/>
    <property type="molecule type" value="Genomic_DNA"/>
</dbReference>
<dbReference type="EMBL" id="AY339435">
    <property type="protein sequence ID" value="AAP89472.1"/>
    <property type="molecule type" value="Genomic_DNA"/>
</dbReference>
<dbReference type="EMBL" id="AY339436">
    <property type="protein sequence ID" value="AAP89485.1"/>
    <property type="molecule type" value="Genomic_DNA"/>
</dbReference>
<dbReference type="EMBL" id="AY339437">
    <property type="protein sequence ID" value="AAP89498.1"/>
    <property type="molecule type" value="Genomic_DNA"/>
</dbReference>
<dbReference type="EMBL" id="AY339438">
    <property type="protein sequence ID" value="AAP89511.1"/>
    <property type="molecule type" value="Genomic_DNA"/>
</dbReference>
<dbReference type="EMBL" id="AY339439">
    <property type="protein sequence ID" value="AAP89524.1"/>
    <property type="molecule type" value="Genomic_DNA"/>
</dbReference>
<dbReference type="EMBL" id="AY339440">
    <property type="protein sequence ID" value="AAP89537.1"/>
    <property type="molecule type" value="Genomic_DNA"/>
</dbReference>
<dbReference type="EMBL" id="AY339441">
    <property type="protein sequence ID" value="AAP89550.1"/>
    <property type="molecule type" value="Genomic_DNA"/>
</dbReference>
<dbReference type="EMBL" id="AY339442">
    <property type="protein sequence ID" value="AAP89563.1"/>
    <property type="molecule type" value="Genomic_DNA"/>
</dbReference>
<dbReference type="EMBL" id="AY339443">
    <property type="protein sequence ID" value="AAP89576.1"/>
    <property type="molecule type" value="Genomic_DNA"/>
</dbReference>
<dbReference type="EMBL" id="AY339444">
    <property type="protein sequence ID" value="AAP89589.1"/>
    <property type="molecule type" value="Genomic_DNA"/>
</dbReference>
<dbReference type="EMBL" id="AY339445">
    <property type="protein sequence ID" value="AAP89602.1"/>
    <property type="molecule type" value="Genomic_DNA"/>
</dbReference>
<dbReference type="EMBL" id="AY339446">
    <property type="protein sequence ID" value="AAP89615.1"/>
    <property type="molecule type" value="Genomic_DNA"/>
</dbReference>
<dbReference type="EMBL" id="AY339447">
    <property type="protein sequence ID" value="AAP89628.1"/>
    <property type="molecule type" value="Genomic_DNA"/>
</dbReference>
<dbReference type="EMBL" id="AY339448">
    <property type="protein sequence ID" value="AAP89641.1"/>
    <property type="molecule type" value="Genomic_DNA"/>
</dbReference>
<dbReference type="EMBL" id="AY339449">
    <property type="protein sequence ID" value="AAP89654.1"/>
    <property type="molecule type" value="Genomic_DNA"/>
</dbReference>
<dbReference type="EMBL" id="AY339450">
    <property type="protein sequence ID" value="AAP89667.1"/>
    <property type="molecule type" value="Genomic_DNA"/>
</dbReference>
<dbReference type="EMBL" id="AY339451">
    <property type="protein sequence ID" value="AAP89680.1"/>
    <property type="molecule type" value="Genomic_DNA"/>
</dbReference>
<dbReference type="EMBL" id="AY339452">
    <property type="protein sequence ID" value="AAP89693.1"/>
    <property type="molecule type" value="Genomic_DNA"/>
</dbReference>
<dbReference type="EMBL" id="AY339453">
    <property type="protein sequence ID" value="AAP89706.1"/>
    <property type="molecule type" value="Genomic_DNA"/>
</dbReference>
<dbReference type="EMBL" id="AY339454">
    <property type="protein sequence ID" value="AAP89719.1"/>
    <property type="molecule type" value="Genomic_DNA"/>
</dbReference>
<dbReference type="EMBL" id="AY339455">
    <property type="protein sequence ID" value="AAP89732.1"/>
    <property type="molecule type" value="Genomic_DNA"/>
</dbReference>
<dbReference type="EMBL" id="AY339456">
    <property type="protein sequence ID" value="AAP89745.1"/>
    <property type="molecule type" value="Genomic_DNA"/>
</dbReference>
<dbReference type="EMBL" id="AY339457">
    <property type="protein sequence ID" value="AAP89758.1"/>
    <property type="molecule type" value="Genomic_DNA"/>
</dbReference>
<dbReference type="EMBL" id="AY339458">
    <property type="protein sequence ID" value="AAP89771.1"/>
    <property type="molecule type" value="Genomic_DNA"/>
</dbReference>
<dbReference type="EMBL" id="AY339459">
    <property type="protein sequence ID" value="AAP89784.1"/>
    <property type="molecule type" value="Genomic_DNA"/>
</dbReference>
<dbReference type="EMBL" id="AY339460">
    <property type="protein sequence ID" value="AAP89797.1"/>
    <property type="molecule type" value="Genomic_DNA"/>
</dbReference>
<dbReference type="EMBL" id="AY339461">
    <property type="protein sequence ID" value="AAP89810.1"/>
    <property type="molecule type" value="Genomic_DNA"/>
</dbReference>
<dbReference type="EMBL" id="AY339462">
    <property type="protein sequence ID" value="AAP89823.1"/>
    <property type="molecule type" value="Genomic_DNA"/>
</dbReference>
<dbReference type="EMBL" id="AY339463">
    <property type="protein sequence ID" value="AAP89836.1"/>
    <property type="molecule type" value="Genomic_DNA"/>
</dbReference>
<dbReference type="EMBL" id="AY339464">
    <property type="protein sequence ID" value="AAP89849.1"/>
    <property type="molecule type" value="Genomic_DNA"/>
</dbReference>
<dbReference type="EMBL" id="AY339465">
    <property type="protein sequence ID" value="AAP89862.1"/>
    <property type="molecule type" value="Genomic_DNA"/>
</dbReference>
<dbReference type="EMBL" id="AY339475">
    <property type="protein sequence ID" value="AAP89992.1"/>
    <property type="molecule type" value="Genomic_DNA"/>
</dbReference>
<dbReference type="EMBL" id="AY339476">
    <property type="protein sequence ID" value="AAP90005.1"/>
    <property type="molecule type" value="Genomic_DNA"/>
</dbReference>
<dbReference type="EMBL" id="AY339477">
    <property type="protein sequence ID" value="AAP90018.1"/>
    <property type="molecule type" value="Genomic_DNA"/>
</dbReference>
<dbReference type="EMBL" id="AY339478">
    <property type="protein sequence ID" value="AAP90031.1"/>
    <property type="molecule type" value="Genomic_DNA"/>
</dbReference>
<dbReference type="EMBL" id="AY339479">
    <property type="protein sequence ID" value="AAP90044.1"/>
    <property type="molecule type" value="Genomic_DNA"/>
</dbReference>
<dbReference type="EMBL" id="AY339480">
    <property type="protein sequence ID" value="AAP90057.1"/>
    <property type="molecule type" value="Genomic_DNA"/>
</dbReference>
<dbReference type="EMBL" id="AY339481">
    <property type="protein sequence ID" value="AAP90070.1"/>
    <property type="molecule type" value="Genomic_DNA"/>
</dbReference>
<dbReference type="EMBL" id="AY339482">
    <property type="protein sequence ID" value="AAP90083.1"/>
    <property type="molecule type" value="Genomic_DNA"/>
</dbReference>
<dbReference type="EMBL" id="AY339483">
    <property type="protein sequence ID" value="AAP90096.1"/>
    <property type="molecule type" value="Genomic_DNA"/>
</dbReference>
<dbReference type="EMBL" id="AY339484">
    <property type="protein sequence ID" value="AAP90109.1"/>
    <property type="molecule type" value="Genomic_DNA"/>
</dbReference>
<dbReference type="EMBL" id="AY339485">
    <property type="protein sequence ID" value="AAP90122.1"/>
    <property type="molecule type" value="Genomic_DNA"/>
</dbReference>
<dbReference type="EMBL" id="AY339486">
    <property type="protein sequence ID" value="AAP90135.1"/>
    <property type="molecule type" value="Genomic_DNA"/>
</dbReference>
<dbReference type="EMBL" id="AY339487">
    <property type="protein sequence ID" value="AAP90148.1"/>
    <property type="molecule type" value="Genomic_DNA"/>
</dbReference>
<dbReference type="EMBL" id="AY339488">
    <property type="protein sequence ID" value="AAP90161.1"/>
    <property type="molecule type" value="Genomic_DNA"/>
</dbReference>
<dbReference type="EMBL" id="AY339489">
    <property type="protein sequence ID" value="AAP90174.1"/>
    <property type="molecule type" value="Genomic_DNA"/>
</dbReference>
<dbReference type="EMBL" id="AY339490">
    <property type="protein sequence ID" value="AAP90187.1"/>
    <property type="molecule type" value="Genomic_DNA"/>
</dbReference>
<dbReference type="EMBL" id="AY339491">
    <property type="protein sequence ID" value="AAP90200.1"/>
    <property type="molecule type" value="Genomic_DNA"/>
</dbReference>
<dbReference type="EMBL" id="AY339492">
    <property type="protein sequence ID" value="AAP90213.1"/>
    <property type="molecule type" value="Genomic_DNA"/>
</dbReference>
<dbReference type="EMBL" id="AY339493">
    <property type="protein sequence ID" value="AAP90226.1"/>
    <property type="molecule type" value="Genomic_DNA"/>
</dbReference>
<dbReference type="EMBL" id="AY339494">
    <property type="protein sequence ID" value="AAP90239.1"/>
    <property type="molecule type" value="Genomic_DNA"/>
</dbReference>
<dbReference type="EMBL" id="AY339495">
    <property type="protein sequence ID" value="AAP90252.1"/>
    <property type="molecule type" value="Genomic_DNA"/>
</dbReference>
<dbReference type="EMBL" id="AY339496">
    <property type="protein sequence ID" value="AAP90265.1"/>
    <property type="molecule type" value="Genomic_DNA"/>
</dbReference>
<dbReference type="EMBL" id="AY339510">
    <property type="protein sequence ID" value="AAP90447.1"/>
    <property type="molecule type" value="Genomic_DNA"/>
</dbReference>
<dbReference type="EMBL" id="AY339511">
    <property type="protein sequence ID" value="AAP90460.1"/>
    <property type="molecule type" value="Genomic_DNA"/>
</dbReference>
<dbReference type="EMBL" id="AY339512">
    <property type="protein sequence ID" value="AAP90473.1"/>
    <property type="molecule type" value="Genomic_DNA"/>
</dbReference>
<dbReference type="EMBL" id="AY339513">
    <property type="protein sequence ID" value="AAP90486.1"/>
    <property type="molecule type" value="Genomic_DNA"/>
</dbReference>
<dbReference type="EMBL" id="AY339523">
    <property type="protein sequence ID" value="AAP90616.1"/>
    <property type="molecule type" value="Genomic_DNA"/>
</dbReference>
<dbReference type="EMBL" id="AY339524">
    <property type="protein sequence ID" value="AAP90629.1"/>
    <property type="molecule type" value="Genomic_DNA"/>
</dbReference>
<dbReference type="EMBL" id="AY339525">
    <property type="protein sequence ID" value="AAP90642.1"/>
    <property type="molecule type" value="Genomic_DNA"/>
</dbReference>
<dbReference type="EMBL" id="AY339526">
    <property type="protein sequence ID" value="AAP90655.1"/>
    <property type="molecule type" value="Genomic_DNA"/>
</dbReference>
<dbReference type="EMBL" id="AY339527">
    <property type="protein sequence ID" value="AAP90668.1"/>
    <property type="molecule type" value="Genomic_DNA"/>
</dbReference>
<dbReference type="EMBL" id="AY339528">
    <property type="protein sequence ID" value="AAP90681.1"/>
    <property type="molecule type" value="Genomic_DNA"/>
</dbReference>
<dbReference type="EMBL" id="AY339529">
    <property type="protein sequence ID" value="AAP90694.1"/>
    <property type="molecule type" value="Genomic_DNA"/>
</dbReference>
<dbReference type="EMBL" id="AY339530">
    <property type="protein sequence ID" value="AAP90707.1"/>
    <property type="molecule type" value="Genomic_DNA"/>
</dbReference>
<dbReference type="EMBL" id="AY339531">
    <property type="protein sequence ID" value="AAP90720.1"/>
    <property type="molecule type" value="Genomic_DNA"/>
</dbReference>
<dbReference type="EMBL" id="AY339532">
    <property type="protein sequence ID" value="AAP90733.1"/>
    <property type="molecule type" value="Genomic_DNA"/>
</dbReference>
<dbReference type="EMBL" id="AY339533">
    <property type="protein sequence ID" value="AAP90746.1"/>
    <property type="molecule type" value="Genomic_DNA"/>
</dbReference>
<dbReference type="EMBL" id="AY339534">
    <property type="protein sequence ID" value="AAP90759.1"/>
    <property type="molecule type" value="Genomic_DNA"/>
</dbReference>
<dbReference type="EMBL" id="AY339535">
    <property type="protein sequence ID" value="AAP90772.1"/>
    <property type="molecule type" value="Genomic_DNA"/>
</dbReference>
<dbReference type="EMBL" id="AY339536">
    <property type="protein sequence ID" value="AAP90785.1"/>
    <property type="molecule type" value="Genomic_DNA"/>
</dbReference>
<dbReference type="EMBL" id="AY339537">
    <property type="protein sequence ID" value="AAP90798.1"/>
    <property type="molecule type" value="Genomic_DNA"/>
</dbReference>
<dbReference type="EMBL" id="AY339538">
    <property type="protein sequence ID" value="AAP90811.1"/>
    <property type="molecule type" value="Genomic_DNA"/>
</dbReference>
<dbReference type="EMBL" id="AY339539">
    <property type="protein sequence ID" value="AAP90824.1"/>
    <property type="molecule type" value="Genomic_DNA"/>
</dbReference>
<dbReference type="EMBL" id="AY339540">
    <property type="protein sequence ID" value="AAP90837.1"/>
    <property type="molecule type" value="Genomic_DNA"/>
</dbReference>
<dbReference type="EMBL" id="AY339541">
    <property type="protein sequence ID" value="AAP90850.1"/>
    <property type="molecule type" value="Genomic_DNA"/>
</dbReference>
<dbReference type="EMBL" id="AY339542">
    <property type="protein sequence ID" value="AAP90863.1"/>
    <property type="molecule type" value="Genomic_DNA"/>
</dbReference>
<dbReference type="EMBL" id="AY339543">
    <property type="protein sequence ID" value="AAP90876.1"/>
    <property type="molecule type" value="Genomic_DNA"/>
</dbReference>
<dbReference type="EMBL" id="AY339544">
    <property type="protein sequence ID" value="AAP90889.1"/>
    <property type="molecule type" value="Genomic_DNA"/>
</dbReference>
<dbReference type="EMBL" id="AY339545">
    <property type="protein sequence ID" value="AAP90902.1"/>
    <property type="molecule type" value="Genomic_DNA"/>
</dbReference>
<dbReference type="EMBL" id="AY339546">
    <property type="protein sequence ID" value="AAP90915.1"/>
    <property type="molecule type" value="Genomic_DNA"/>
</dbReference>
<dbReference type="EMBL" id="AY339549">
    <property type="protein sequence ID" value="AAP90954.1"/>
    <property type="molecule type" value="Genomic_DNA"/>
</dbReference>
<dbReference type="EMBL" id="AY339550">
    <property type="protein sequence ID" value="AAP90967.1"/>
    <property type="molecule type" value="Genomic_DNA"/>
</dbReference>
<dbReference type="EMBL" id="AY339551">
    <property type="protein sequence ID" value="AAP90980.1"/>
    <property type="molecule type" value="Genomic_DNA"/>
</dbReference>
<dbReference type="EMBL" id="AY339552">
    <property type="protein sequence ID" value="AAP90993.1"/>
    <property type="molecule type" value="Genomic_DNA"/>
</dbReference>
<dbReference type="EMBL" id="AY339553">
    <property type="protein sequence ID" value="AAP91006.1"/>
    <property type="molecule type" value="Genomic_DNA"/>
</dbReference>
<dbReference type="EMBL" id="AY339566">
    <property type="protein sequence ID" value="AAP91175.1"/>
    <property type="molecule type" value="Genomic_DNA"/>
</dbReference>
<dbReference type="EMBL" id="AY339567">
    <property type="protein sequence ID" value="AAP91188.1"/>
    <property type="molecule type" value="Genomic_DNA"/>
</dbReference>
<dbReference type="EMBL" id="AY339568">
    <property type="protein sequence ID" value="AAP91201.1"/>
    <property type="molecule type" value="Genomic_DNA"/>
</dbReference>
<dbReference type="EMBL" id="AY339569">
    <property type="protein sequence ID" value="AAP91214.1"/>
    <property type="molecule type" value="Genomic_DNA"/>
</dbReference>
<dbReference type="EMBL" id="AY339570">
    <property type="protein sequence ID" value="AAP91227.1"/>
    <property type="molecule type" value="Genomic_DNA"/>
</dbReference>
<dbReference type="EMBL" id="AY339571">
    <property type="protein sequence ID" value="AAP91240.1"/>
    <property type="molecule type" value="Genomic_DNA"/>
</dbReference>
<dbReference type="EMBL" id="AY339572">
    <property type="protein sequence ID" value="AAP91253.1"/>
    <property type="molecule type" value="Genomic_DNA"/>
</dbReference>
<dbReference type="EMBL" id="AY339573">
    <property type="protein sequence ID" value="AAP91266.1"/>
    <property type="molecule type" value="Genomic_DNA"/>
</dbReference>
<dbReference type="EMBL" id="AY339574">
    <property type="protein sequence ID" value="AAP91279.1"/>
    <property type="molecule type" value="Genomic_DNA"/>
</dbReference>
<dbReference type="EMBL" id="AF346963">
    <property type="protein sequence ID" value="AAK17214.1"/>
    <property type="molecule type" value="Genomic_DNA"/>
</dbReference>
<dbReference type="EMBL" id="AF346964">
    <property type="protein sequence ID" value="AAK17227.2"/>
    <property type="molecule type" value="Genomic_DNA"/>
</dbReference>
<dbReference type="EMBL" id="AF346971">
    <property type="protein sequence ID" value="AAK17318.2"/>
    <property type="molecule type" value="Genomic_DNA"/>
</dbReference>
<dbReference type="EMBL" id="AF346973">
    <property type="protein sequence ID" value="AAK17344.2"/>
    <property type="molecule type" value="Genomic_DNA"/>
</dbReference>
<dbReference type="EMBL" id="AF346974">
    <property type="protein sequence ID" value="AAK17357.2"/>
    <property type="molecule type" value="Genomic_DNA"/>
</dbReference>
<dbReference type="EMBL" id="AF346975">
    <property type="protein sequence ID" value="AAK17370.2"/>
    <property type="molecule type" value="Genomic_DNA"/>
</dbReference>
<dbReference type="EMBL" id="AF346978">
    <property type="protein sequence ID" value="AAK17409.1"/>
    <property type="molecule type" value="Genomic_DNA"/>
</dbReference>
<dbReference type="EMBL" id="AF346981">
    <property type="protein sequence ID" value="AAK17448.2"/>
    <property type="molecule type" value="Genomic_DNA"/>
</dbReference>
<dbReference type="EMBL" id="AF346982">
    <property type="protein sequence ID" value="AAK17461.1"/>
    <property type="molecule type" value="Genomic_DNA"/>
</dbReference>
<dbReference type="EMBL" id="AF346988">
    <property type="protein sequence ID" value="AAK17539.1"/>
    <property type="molecule type" value="Genomic_DNA"/>
</dbReference>
<dbReference type="EMBL" id="AF346993">
    <property type="protein sequence ID" value="AAK17604.2"/>
    <property type="molecule type" value="Genomic_DNA"/>
</dbReference>
<dbReference type="EMBL" id="AF347001">
    <property type="protein sequence ID" value="AAK17708.2"/>
    <property type="molecule type" value="Genomic_DNA"/>
</dbReference>
<dbReference type="EMBL" id="AF347002">
    <property type="protein sequence ID" value="AAK17721.2"/>
    <property type="molecule type" value="Genomic_DNA"/>
</dbReference>
<dbReference type="EMBL" id="AF347004">
    <property type="protein sequence ID" value="AAK17747.2"/>
    <property type="molecule type" value="Genomic_DNA"/>
</dbReference>
<dbReference type="EMBL" id="AF347005">
    <property type="protein sequence ID" value="AAK17760.2"/>
    <property type="molecule type" value="Genomic_DNA"/>
</dbReference>
<dbReference type="EMBL" id="AF347006">
    <property type="protein sequence ID" value="AAK17773.2"/>
    <property type="molecule type" value="Genomic_DNA"/>
</dbReference>
<dbReference type="EMBL" id="AF347007">
    <property type="protein sequence ID" value="AAK17786.2"/>
    <property type="molecule type" value="Genomic_DNA"/>
</dbReference>
<dbReference type="EMBL" id="AF347011">
    <property type="protein sequence ID" value="AAK17838.2"/>
    <property type="molecule type" value="Genomic_DNA"/>
</dbReference>
<dbReference type="EMBL" id="AY289051">
    <property type="protein sequence ID" value="AAP47887.1"/>
    <property type="molecule type" value="Genomic_DNA"/>
</dbReference>
<dbReference type="EMBL" id="AY289052">
    <property type="protein sequence ID" value="AAP47900.1"/>
    <property type="molecule type" value="Genomic_DNA"/>
</dbReference>
<dbReference type="EMBL" id="AY289053">
    <property type="protein sequence ID" value="AAP47913.1"/>
    <property type="molecule type" value="Genomic_DNA"/>
</dbReference>
<dbReference type="EMBL" id="AY289054">
    <property type="protein sequence ID" value="AAP47926.1"/>
    <property type="molecule type" value="Genomic_DNA"/>
</dbReference>
<dbReference type="EMBL" id="AY289055">
    <property type="protein sequence ID" value="AAP47939.1"/>
    <property type="molecule type" value="Genomic_DNA"/>
</dbReference>
<dbReference type="EMBL" id="AY289056">
    <property type="protein sequence ID" value="AAP47952.1"/>
    <property type="molecule type" value="Genomic_DNA"/>
</dbReference>
<dbReference type="EMBL" id="AY289058">
    <property type="protein sequence ID" value="AAP47978.1"/>
    <property type="molecule type" value="Genomic_DNA"/>
</dbReference>
<dbReference type="EMBL" id="AY289059">
    <property type="protein sequence ID" value="AAP47991.1"/>
    <property type="molecule type" value="Genomic_DNA"/>
</dbReference>
<dbReference type="EMBL" id="AY289060">
    <property type="protein sequence ID" value="AAP48004.1"/>
    <property type="molecule type" value="Genomic_DNA"/>
</dbReference>
<dbReference type="EMBL" id="AY289061">
    <property type="protein sequence ID" value="AAP48017.1"/>
    <property type="molecule type" value="Genomic_DNA"/>
</dbReference>
<dbReference type="EMBL" id="AY289062">
    <property type="protein sequence ID" value="AAP48030.1"/>
    <property type="molecule type" value="Genomic_DNA"/>
</dbReference>
<dbReference type="EMBL" id="AY289063">
    <property type="protein sequence ID" value="AAP48043.1"/>
    <property type="molecule type" value="Genomic_DNA"/>
</dbReference>
<dbReference type="EMBL" id="AY289065">
    <property type="protein sequence ID" value="AAP48069.1"/>
    <property type="molecule type" value="Genomic_DNA"/>
</dbReference>
<dbReference type="EMBL" id="AY289068">
    <property type="protein sequence ID" value="AAP48108.1"/>
    <property type="molecule type" value="Genomic_DNA"/>
</dbReference>
<dbReference type="EMBL" id="AY289069">
    <property type="protein sequence ID" value="AAP48121.1"/>
    <property type="molecule type" value="Genomic_DNA"/>
</dbReference>
<dbReference type="EMBL" id="AY289073">
    <property type="protein sequence ID" value="AAP48173.1"/>
    <property type="molecule type" value="Genomic_DNA"/>
</dbReference>
<dbReference type="EMBL" id="AY289076">
    <property type="protein sequence ID" value="AAP48212.1"/>
    <property type="molecule type" value="Genomic_DNA"/>
</dbReference>
<dbReference type="EMBL" id="AY289077">
    <property type="protein sequence ID" value="AAP48225.1"/>
    <property type="molecule type" value="Genomic_DNA"/>
</dbReference>
<dbReference type="EMBL" id="AY289080">
    <property type="protein sequence ID" value="AAP48264.1"/>
    <property type="molecule type" value="Genomic_DNA"/>
</dbReference>
<dbReference type="EMBL" id="AY289083">
    <property type="protein sequence ID" value="AAP48303.1"/>
    <property type="molecule type" value="Genomic_DNA"/>
</dbReference>
<dbReference type="EMBL" id="AY289084">
    <property type="protein sequence ID" value="AAP48316.1"/>
    <property type="molecule type" value="Genomic_DNA"/>
</dbReference>
<dbReference type="EMBL" id="AY289086">
    <property type="protein sequence ID" value="AAP48342.1"/>
    <property type="molecule type" value="Genomic_DNA"/>
</dbReference>
<dbReference type="EMBL" id="AY289087">
    <property type="protein sequence ID" value="AAP48355.1"/>
    <property type="molecule type" value="Genomic_DNA"/>
</dbReference>
<dbReference type="EMBL" id="AY289088">
    <property type="protein sequence ID" value="AAP48368.1"/>
    <property type="molecule type" value="Genomic_DNA"/>
</dbReference>
<dbReference type="EMBL" id="AY289091">
    <property type="protein sequence ID" value="AAP48407.1"/>
    <property type="molecule type" value="Genomic_DNA"/>
</dbReference>
<dbReference type="EMBL" id="AY289092">
    <property type="protein sequence ID" value="AAP48420.1"/>
    <property type="molecule type" value="Genomic_DNA"/>
</dbReference>
<dbReference type="EMBL" id="AY289093">
    <property type="protein sequence ID" value="AAP48432.1"/>
    <property type="molecule type" value="Genomic_DNA"/>
</dbReference>
<dbReference type="EMBL" id="AY289094">
    <property type="protein sequence ID" value="AAP48445.1"/>
    <property type="molecule type" value="Genomic_DNA"/>
</dbReference>
<dbReference type="EMBL" id="AY289095">
    <property type="protein sequence ID" value="AAP48458.1"/>
    <property type="molecule type" value="Genomic_DNA"/>
</dbReference>
<dbReference type="EMBL" id="AY289096">
    <property type="protein sequence ID" value="AAP48471.1"/>
    <property type="molecule type" value="Genomic_DNA"/>
</dbReference>
<dbReference type="EMBL" id="AY289099">
    <property type="protein sequence ID" value="AAP48510.1"/>
    <property type="molecule type" value="Genomic_DNA"/>
</dbReference>
<dbReference type="EMBL" id="AY289100">
    <property type="protein sequence ID" value="AAP48523.1"/>
    <property type="molecule type" value="Genomic_DNA"/>
</dbReference>
<dbReference type="EMBL" id="AY289101">
    <property type="protein sequence ID" value="AAP48536.1"/>
    <property type="molecule type" value="Genomic_DNA"/>
</dbReference>
<dbReference type="EMBL" id="AY289102">
    <property type="protein sequence ID" value="AAP48549.1"/>
    <property type="molecule type" value="Genomic_DNA"/>
</dbReference>
<dbReference type="EMBL" id="AY495090">
    <property type="protein sequence ID" value="AAR92503.1"/>
    <property type="molecule type" value="Genomic_DNA"/>
</dbReference>
<dbReference type="EMBL" id="AY495091">
    <property type="protein sequence ID" value="AAR92516.1"/>
    <property type="molecule type" value="Genomic_DNA"/>
</dbReference>
<dbReference type="EMBL" id="AY495092">
    <property type="protein sequence ID" value="AAR92529.1"/>
    <property type="molecule type" value="Genomic_DNA"/>
</dbReference>
<dbReference type="EMBL" id="AY495093">
    <property type="protein sequence ID" value="AAR92542.1"/>
    <property type="molecule type" value="Genomic_DNA"/>
</dbReference>
<dbReference type="EMBL" id="AY495094">
    <property type="protein sequence ID" value="AAR92555.1"/>
    <property type="molecule type" value="Genomic_DNA"/>
</dbReference>
<dbReference type="EMBL" id="AY495095">
    <property type="protein sequence ID" value="AAR92568.1"/>
    <property type="molecule type" value="Genomic_DNA"/>
</dbReference>
<dbReference type="EMBL" id="AY495096">
    <property type="protein sequence ID" value="AAR92581.1"/>
    <property type="molecule type" value="Genomic_DNA"/>
</dbReference>
<dbReference type="EMBL" id="AY495097">
    <property type="protein sequence ID" value="AAR92594.1"/>
    <property type="molecule type" value="Genomic_DNA"/>
</dbReference>
<dbReference type="EMBL" id="AY495098">
    <property type="protein sequence ID" value="AAR92607.1"/>
    <property type="molecule type" value="Genomic_DNA"/>
</dbReference>
<dbReference type="EMBL" id="AY495099">
    <property type="protein sequence ID" value="AAR92620.1"/>
    <property type="molecule type" value="Genomic_DNA"/>
</dbReference>
<dbReference type="EMBL" id="AY495100">
    <property type="protein sequence ID" value="AAR92633.1"/>
    <property type="molecule type" value="Genomic_DNA"/>
</dbReference>
<dbReference type="EMBL" id="AY495101">
    <property type="protein sequence ID" value="AAR92646.1"/>
    <property type="molecule type" value="Genomic_DNA"/>
</dbReference>
<dbReference type="EMBL" id="AY495102">
    <property type="protein sequence ID" value="AAR92659.1"/>
    <property type="molecule type" value="Genomic_DNA"/>
</dbReference>
<dbReference type="EMBL" id="AY495103">
    <property type="protein sequence ID" value="AAR92672.1"/>
    <property type="molecule type" value="Genomic_DNA"/>
</dbReference>
<dbReference type="EMBL" id="AY495104">
    <property type="protein sequence ID" value="AAR92685.1"/>
    <property type="molecule type" value="Genomic_DNA"/>
</dbReference>
<dbReference type="EMBL" id="AY495105">
    <property type="protein sequence ID" value="AAR92698.1"/>
    <property type="molecule type" value="Genomic_DNA"/>
</dbReference>
<dbReference type="EMBL" id="AY495106">
    <property type="protein sequence ID" value="AAR92711.1"/>
    <property type="molecule type" value="Genomic_DNA"/>
</dbReference>
<dbReference type="EMBL" id="AY495107">
    <property type="protein sequence ID" value="AAR92724.1"/>
    <property type="molecule type" value="Genomic_DNA"/>
</dbReference>
<dbReference type="EMBL" id="AY495108">
    <property type="protein sequence ID" value="AAR92737.1"/>
    <property type="molecule type" value="Genomic_DNA"/>
</dbReference>
<dbReference type="EMBL" id="AY495109">
    <property type="protein sequence ID" value="AAR92750.1"/>
    <property type="molecule type" value="Genomic_DNA"/>
</dbReference>
<dbReference type="EMBL" id="AY495110">
    <property type="protein sequence ID" value="AAR92763.1"/>
    <property type="molecule type" value="Genomic_DNA"/>
</dbReference>
<dbReference type="EMBL" id="AY495111">
    <property type="protein sequence ID" value="AAR92776.1"/>
    <property type="molecule type" value="Genomic_DNA"/>
</dbReference>
<dbReference type="EMBL" id="AY495112">
    <property type="protein sequence ID" value="AAR92789.1"/>
    <property type="molecule type" value="Genomic_DNA"/>
</dbReference>
<dbReference type="EMBL" id="AY495113">
    <property type="protein sequence ID" value="AAR92802.1"/>
    <property type="molecule type" value="Genomic_DNA"/>
</dbReference>
<dbReference type="EMBL" id="AY495114">
    <property type="protein sequence ID" value="AAR92815.1"/>
    <property type="molecule type" value="Genomic_DNA"/>
</dbReference>
<dbReference type="EMBL" id="AY495115">
    <property type="protein sequence ID" value="AAR92828.1"/>
    <property type="molecule type" value="Genomic_DNA"/>
</dbReference>
<dbReference type="EMBL" id="AY495116">
    <property type="protein sequence ID" value="AAR92841.1"/>
    <property type="molecule type" value="Genomic_DNA"/>
</dbReference>
<dbReference type="EMBL" id="AY495117">
    <property type="protein sequence ID" value="AAR92854.1"/>
    <property type="molecule type" value="Genomic_DNA"/>
</dbReference>
<dbReference type="EMBL" id="AY495118">
    <property type="protein sequence ID" value="AAR92867.1"/>
    <property type="molecule type" value="Genomic_DNA"/>
</dbReference>
<dbReference type="EMBL" id="AY495119">
    <property type="protein sequence ID" value="AAR92880.1"/>
    <property type="molecule type" value="Genomic_DNA"/>
</dbReference>
<dbReference type="EMBL" id="AY495120">
    <property type="protein sequence ID" value="AAR92893.1"/>
    <property type="molecule type" value="Genomic_DNA"/>
</dbReference>
<dbReference type="EMBL" id="AY495121">
    <property type="protein sequence ID" value="AAR92906.1"/>
    <property type="molecule type" value="Genomic_DNA"/>
</dbReference>
<dbReference type="EMBL" id="AY495122">
    <property type="protein sequence ID" value="AAR92919.1"/>
    <property type="molecule type" value="Genomic_DNA"/>
</dbReference>
<dbReference type="EMBL" id="AY495123">
    <property type="protein sequence ID" value="AAR92932.1"/>
    <property type="molecule type" value="Genomic_DNA"/>
</dbReference>
<dbReference type="EMBL" id="AY495124">
    <property type="protein sequence ID" value="AAR92945.1"/>
    <property type="molecule type" value="Genomic_DNA"/>
</dbReference>
<dbReference type="EMBL" id="AY495125">
    <property type="protein sequence ID" value="AAR92958.1"/>
    <property type="molecule type" value="Genomic_DNA"/>
</dbReference>
<dbReference type="EMBL" id="AY495126">
    <property type="protein sequence ID" value="AAR92971.1"/>
    <property type="molecule type" value="Genomic_DNA"/>
</dbReference>
<dbReference type="EMBL" id="AY495127">
    <property type="protein sequence ID" value="AAR92984.1"/>
    <property type="molecule type" value="Genomic_DNA"/>
</dbReference>
<dbReference type="EMBL" id="AY495128">
    <property type="protein sequence ID" value="AAR92997.1"/>
    <property type="molecule type" value="Genomic_DNA"/>
</dbReference>
<dbReference type="EMBL" id="AY495129">
    <property type="protein sequence ID" value="AAR93010.1"/>
    <property type="molecule type" value="Genomic_DNA"/>
</dbReference>
<dbReference type="EMBL" id="AY495130">
    <property type="protein sequence ID" value="AAR93023.1"/>
    <property type="molecule type" value="Genomic_DNA"/>
</dbReference>
<dbReference type="EMBL" id="AY495131">
    <property type="protein sequence ID" value="AAR93036.1"/>
    <property type="molecule type" value="Genomic_DNA"/>
</dbReference>
<dbReference type="EMBL" id="AY495132">
    <property type="protein sequence ID" value="AAR93049.1"/>
    <property type="molecule type" value="Genomic_DNA"/>
</dbReference>
<dbReference type="EMBL" id="AY495133">
    <property type="protein sequence ID" value="AAR93062.1"/>
    <property type="molecule type" value="Genomic_DNA"/>
</dbReference>
<dbReference type="EMBL" id="AY495134">
    <property type="protein sequence ID" value="AAR93075.1"/>
    <property type="molecule type" value="Genomic_DNA"/>
</dbReference>
<dbReference type="EMBL" id="AY495135">
    <property type="protein sequence ID" value="AAR93088.1"/>
    <property type="molecule type" value="Genomic_DNA"/>
</dbReference>
<dbReference type="EMBL" id="AY495136">
    <property type="protein sequence ID" value="AAR93101.1"/>
    <property type="molecule type" value="Genomic_DNA"/>
</dbReference>
<dbReference type="EMBL" id="AY495137">
    <property type="protein sequence ID" value="AAR93114.1"/>
    <property type="molecule type" value="Genomic_DNA"/>
</dbReference>
<dbReference type="EMBL" id="AY495138">
    <property type="protein sequence ID" value="AAR93127.1"/>
    <property type="molecule type" value="Genomic_DNA"/>
</dbReference>
<dbReference type="EMBL" id="AY495139">
    <property type="protein sequence ID" value="AAR93140.1"/>
    <property type="molecule type" value="Genomic_DNA"/>
</dbReference>
<dbReference type="EMBL" id="AY495140">
    <property type="protein sequence ID" value="AAR93153.1"/>
    <property type="molecule type" value="Genomic_DNA"/>
</dbReference>
<dbReference type="EMBL" id="AY495141">
    <property type="protein sequence ID" value="AAR93166.1"/>
    <property type="molecule type" value="Genomic_DNA"/>
</dbReference>
<dbReference type="EMBL" id="AY495142">
    <property type="protein sequence ID" value="AAR93179.1"/>
    <property type="molecule type" value="Genomic_DNA"/>
</dbReference>
<dbReference type="EMBL" id="AY495143">
    <property type="protein sequence ID" value="AAR93192.1"/>
    <property type="molecule type" value="Genomic_DNA"/>
</dbReference>
<dbReference type="EMBL" id="AY495144">
    <property type="protein sequence ID" value="AAR93205.1"/>
    <property type="molecule type" value="Genomic_DNA"/>
</dbReference>
<dbReference type="EMBL" id="AY495145">
    <property type="protein sequence ID" value="AAR93218.1"/>
    <property type="molecule type" value="Genomic_DNA"/>
</dbReference>
<dbReference type="EMBL" id="AY495146">
    <property type="protein sequence ID" value="AAR93231.1"/>
    <property type="molecule type" value="Genomic_DNA"/>
</dbReference>
<dbReference type="EMBL" id="AY495147">
    <property type="protein sequence ID" value="AAR93244.1"/>
    <property type="molecule type" value="Genomic_DNA"/>
</dbReference>
<dbReference type="EMBL" id="AY495148">
    <property type="protein sequence ID" value="AAR93257.1"/>
    <property type="molecule type" value="Genomic_DNA"/>
</dbReference>
<dbReference type="EMBL" id="AY495149">
    <property type="protein sequence ID" value="AAR93270.1"/>
    <property type="molecule type" value="Genomic_DNA"/>
</dbReference>
<dbReference type="EMBL" id="AY495150">
    <property type="protein sequence ID" value="AAR93283.1"/>
    <property type="molecule type" value="Genomic_DNA"/>
</dbReference>
<dbReference type="EMBL" id="AY495151">
    <property type="protein sequence ID" value="AAR93296.1"/>
    <property type="molecule type" value="Genomic_DNA"/>
</dbReference>
<dbReference type="EMBL" id="AY495152">
    <property type="protein sequence ID" value="AAR93309.1"/>
    <property type="molecule type" value="Genomic_DNA"/>
</dbReference>
<dbReference type="EMBL" id="AY495153">
    <property type="protein sequence ID" value="AAR93322.1"/>
    <property type="molecule type" value="Genomic_DNA"/>
</dbReference>
<dbReference type="EMBL" id="AY495154">
    <property type="protein sequence ID" value="AAR93335.1"/>
    <property type="molecule type" value="Genomic_DNA"/>
</dbReference>
<dbReference type="EMBL" id="AY495155">
    <property type="protein sequence ID" value="AAR93348.1"/>
    <property type="molecule type" value="Genomic_DNA"/>
</dbReference>
<dbReference type="EMBL" id="AY495156">
    <property type="protein sequence ID" value="AAR93361.1"/>
    <property type="molecule type" value="Genomic_DNA"/>
</dbReference>
<dbReference type="EMBL" id="AY495157">
    <property type="protein sequence ID" value="AAR93374.1"/>
    <property type="molecule type" value="Genomic_DNA"/>
</dbReference>
<dbReference type="EMBL" id="AY495158">
    <property type="protein sequence ID" value="AAR93387.1"/>
    <property type="molecule type" value="Genomic_DNA"/>
</dbReference>
<dbReference type="EMBL" id="AY495159">
    <property type="protein sequence ID" value="AAR93400.1"/>
    <property type="molecule type" value="Genomic_DNA"/>
</dbReference>
<dbReference type="EMBL" id="AY495160">
    <property type="protein sequence ID" value="AAR93413.1"/>
    <property type="molecule type" value="Genomic_DNA"/>
</dbReference>
<dbReference type="EMBL" id="AY495161">
    <property type="protein sequence ID" value="AAR93426.1"/>
    <property type="molecule type" value="Genomic_DNA"/>
</dbReference>
<dbReference type="EMBL" id="AY495162">
    <property type="protein sequence ID" value="AAR93439.1"/>
    <property type="molecule type" value="Genomic_DNA"/>
</dbReference>
<dbReference type="EMBL" id="AY495163">
    <property type="protein sequence ID" value="AAR93452.1"/>
    <property type="molecule type" value="Genomic_DNA"/>
</dbReference>
<dbReference type="EMBL" id="AY495164">
    <property type="protein sequence ID" value="AAR93465.1"/>
    <property type="molecule type" value="Genomic_DNA"/>
</dbReference>
<dbReference type="EMBL" id="AY495165">
    <property type="protein sequence ID" value="AAR93478.1"/>
    <property type="molecule type" value="Genomic_DNA"/>
</dbReference>
<dbReference type="EMBL" id="AY495166">
    <property type="protein sequence ID" value="AAR93491.1"/>
    <property type="molecule type" value="Genomic_DNA"/>
</dbReference>
<dbReference type="EMBL" id="AY495167">
    <property type="protein sequence ID" value="AAR93504.1"/>
    <property type="molecule type" value="Genomic_DNA"/>
</dbReference>
<dbReference type="EMBL" id="AY495168">
    <property type="protein sequence ID" value="AAR93517.1"/>
    <property type="molecule type" value="Genomic_DNA"/>
</dbReference>
<dbReference type="EMBL" id="AY495169">
    <property type="protein sequence ID" value="AAR93530.1"/>
    <property type="molecule type" value="Genomic_DNA"/>
</dbReference>
<dbReference type="EMBL" id="AY495171">
    <property type="protein sequence ID" value="AAR93556.1"/>
    <property type="molecule type" value="Genomic_DNA"/>
</dbReference>
<dbReference type="EMBL" id="AY495172">
    <property type="protein sequence ID" value="AAR93569.1"/>
    <property type="molecule type" value="Genomic_DNA"/>
</dbReference>
<dbReference type="EMBL" id="AY495173">
    <property type="protein sequence ID" value="AAR93582.1"/>
    <property type="molecule type" value="Genomic_DNA"/>
</dbReference>
<dbReference type="EMBL" id="AY495174">
    <property type="protein sequence ID" value="AAR93595.1"/>
    <property type="molecule type" value="Genomic_DNA"/>
</dbReference>
<dbReference type="EMBL" id="AY495175">
    <property type="protein sequence ID" value="AAR93608.1"/>
    <property type="molecule type" value="Genomic_DNA"/>
</dbReference>
<dbReference type="EMBL" id="AY495176">
    <property type="protein sequence ID" value="AAR93621.1"/>
    <property type="molecule type" value="Genomic_DNA"/>
</dbReference>
<dbReference type="EMBL" id="AY495177">
    <property type="protein sequence ID" value="AAR93634.1"/>
    <property type="molecule type" value="Genomic_DNA"/>
</dbReference>
<dbReference type="EMBL" id="AY495178">
    <property type="protein sequence ID" value="AAR93647.1"/>
    <property type="molecule type" value="Genomic_DNA"/>
</dbReference>
<dbReference type="EMBL" id="AY495179">
    <property type="protein sequence ID" value="AAR93660.1"/>
    <property type="molecule type" value="Genomic_DNA"/>
</dbReference>
<dbReference type="EMBL" id="AY495180">
    <property type="protein sequence ID" value="AAR93673.1"/>
    <property type="molecule type" value="Genomic_DNA"/>
</dbReference>
<dbReference type="EMBL" id="AY495181">
    <property type="protein sequence ID" value="AAR93686.1"/>
    <property type="molecule type" value="Genomic_DNA"/>
</dbReference>
<dbReference type="EMBL" id="AY495182">
    <property type="protein sequence ID" value="AAR93699.1"/>
    <property type="molecule type" value="Genomic_DNA"/>
</dbReference>
<dbReference type="EMBL" id="AY495183">
    <property type="protein sequence ID" value="AAR93712.1"/>
    <property type="molecule type" value="Genomic_DNA"/>
</dbReference>
<dbReference type="EMBL" id="AY495184">
    <property type="protein sequence ID" value="AAR93725.1"/>
    <property type="molecule type" value="Genomic_DNA"/>
</dbReference>
<dbReference type="EMBL" id="AY495185">
    <property type="protein sequence ID" value="AAR93738.1"/>
    <property type="molecule type" value="Genomic_DNA"/>
</dbReference>
<dbReference type="EMBL" id="AY495186">
    <property type="protein sequence ID" value="AAR93751.1"/>
    <property type="molecule type" value="Genomic_DNA"/>
</dbReference>
<dbReference type="EMBL" id="AY495187">
    <property type="protein sequence ID" value="AAR93764.1"/>
    <property type="molecule type" value="Genomic_DNA"/>
</dbReference>
<dbReference type="EMBL" id="AY495188">
    <property type="protein sequence ID" value="AAR93777.1"/>
    <property type="molecule type" value="Genomic_DNA"/>
</dbReference>
<dbReference type="EMBL" id="AY495189">
    <property type="protein sequence ID" value="AAR93790.1"/>
    <property type="molecule type" value="Genomic_DNA"/>
</dbReference>
<dbReference type="EMBL" id="AY495190">
    <property type="protein sequence ID" value="AAR93803.1"/>
    <property type="molecule type" value="Genomic_DNA"/>
</dbReference>
<dbReference type="EMBL" id="AY495191">
    <property type="protein sequence ID" value="AAR93816.1"/>
    <property type="molecule type" value="Genomic_DNA"/>
</dbReference>
<dbReference type="EMBL" id="AY495192">
    <property type="protein sequence ID" value="AAR93829.1"/>
    <property type="molecule type" value="Genomic_DNA"/>
</dbReference>
<dbReference type="EMBL" id="AY495193">
    <property type="protein sequence ID" value="AAR93842.1"/>
    <property type="molecule type" value="Genomic_DNA"/>
</dbReference>
<dbReference type="EMBL" id="AY495194">
    <property type="protein sequence ID" value="AAR93855.1"/>
    <property type="molecule type" value="Genomic_DNA"/>
</dbReference>
<dbReference type="EMBL" id="AY495239">
    <property type="protein sequence ID" value="AAR94440.1"/>
    <property type="molecule type" value="Genomic_DNA"/>
</dbReference>
<dbReference type="EMBL" id="AY495240">
    <property type="protein sequence ID" value="AAR94453.1"/>
    <property type="molecule type" value="Genomic_DNA"/>
</dbReference>
<dbReference type="EMBL" id="AY495241">
    <property type="protein sequence ID" value="AAR94466.1"/>
    <property type="molecule type" value="Genomic_DNA"/>
</dbReference>
<dbReference type="EMBL" id="AY495242">
    <property type="protein sequence ID" value="AAR94479.1"/>
    <property type="molecule type" value="Genomic_DNA"/>
</dbReference>
<dbReference type="EMBL" id="AY495244">
    <property type="protein sequence ID" value="AAR94505.1"/>
    <property type="molecule type" value="Genomic_DNA"/>
</dbReference>
<dbReference type="EMBL" id="AY495246">
    <property type="protein sequence ID" value="AAR94531.1"/>
    <property type="molecule type" value="Genomic_DNA"/>
</dbReference>
<dbReference type="EMBL" id="AY495247">
    <property type="protein sequence ID" value="AAR94544.1"/>
    <property type="molecule type" value="Genomic_DNA"/>
</dbReference>
<dbReference type="EMBL" id="AY495248">
    <property type="protein sequence ID" value="AAR94557.1"/>
    <property type="molecule type" value="Genomic_DNA"/>
</dbReference>
<dbReference type="EMBL" id="AY495249">
    <property type="protein sequence ID" value="AAR94570.1"/>
    <property type="molecule type" value="Genomic_DNA"/>
</dbReference>
<dbReference type="EMBL" id="AY495252">
    <property type="protein sequence ID" value="AAR94609.1"/>
    <property type="molecule type" value="Genomic_DNA"/>
</dbReference>
<dbReference type="EMBL" id="AY495267">
    <property type="protein sequence ID" value="AAR94804.1"/>
    <property type="molecule type" value="Genomic_DNA"/>
</dbReference>
<dbReference type="EMBL" id="AY495268">
    <property type="protein sequence ID" value="AAR94817.1"/>
    <property type="molecule type" value="Genomic_DNA"/>
</dbReference>
<dbReference type="EMBL" id="AY495269">
    <property type="protein sequence ID" value="AAR94830.1"/>
    <property type="molecule type" value="Genomic_DNA"/>
</dbReference>
<dbReference type="EMBL" id="AY495270">
    <property type="protein sequence ID" value="AAR94843.1"/>
    <property type="molecule type" value="Genomic_DNA"/>
</dbReference>
<dbReference type="EMBL" id="AY495271">
    <property type="protein sequence ID" value="AAR94856.1"/>
    <property type="molecule type" value="Genomic_DNA"/>
</dbReference>
<dbReference type="EMBL" id="AY495272">
    <property type="protein sequence ID" value="AAR94869.1"/>
    <property type="molecule type" value="Genomic_DNA"/>
</dbReference>
<dbReference type="EMBL" id="AY495273">
    <property type="protein sequence ID" value="AAR94882.1"/>
    <property type="molecule type" value="Genomic_DNA"/>
</dbReference>
<dbReference type="EMBL" id="AY495274">
    <property type="protein sequence ID" value="AAR94895.1"/>
    <property type="molecule type" value="Genomic_DNA"/>
</dbReference>
<dbReference type="EMBL" id="AY495275">
    <property type="protein sequence ID" value="AAR94908.1"/>
    <property type="molecule type" value="Genomic_DNA"/>
</dbReference>
<dbReference type="EMBL" id="AY495276">
    <property type="protein sequence ID" value="AAR94921.1"/>
    <property type="molecule type" value="Genomic_DNA"/>
</dbReference>
<dbReference type="EMBL" id="AY495277">
    <property type="protein sequence ID" value="AAR94934.1"/>
    <property type="molecule type" value="Genomic_DNA"/>
</dbReference>
<dbReference type="EMBL" id="AY495278">
    <property type="protein sequence ID" value="AAR94947.1"/>
    <property type="molecule type" value="Genomic_DNA"/>
</dbReference>
<dbReference type="EMBL" id="AY495279">
    <property type="protein sequence ID" value="AAR94960.1"/>
    <property type="molecule type" value="Genomic_DNA"/>
</dbReference>
<dbReference type="EMBL" id="AY495280">
    <property type="protein sequence ID" value="AAR94973.1"/>
    <property type="molecule type" value="Genomic_DNA"/>
</dbReference>
<dbReference type="EMBL" id="AY495281">
    <property type="protein sequence ID" value="AAR94986.1"/>
    <property type="molecule type" value="Genomic_DNA"/>
</dbReference>
<dbReference type="EMBL" id="AY495282">
    <property type="protein sequence ID" value="AAR94999.1"/>
    <property type="molecule type" value="Genomic_DNA"/>
</dbReference>
<dbReference type="EMBL" id="AY495283">
    <property type="protein sequence ID" value="AAR95012.1"/>
    <property type="molecule type" value="Genomic_DNA"/>
</dbReference>
<dbReference type="EMBL" id="AY495284">
    <property type="protein sequence ID" value="AAR95025.1"/>
    <property type="molecule type" value="Genomic_DNA"/>
</dbReference>
<dbReference type="EMBL" id="AY495285">
    <property type="protein sequence ID" value="AAR95038.1"/>
    <property type="molecule type" value="Genomic_DNA"/>
</dbReference>
<dbReference type="EMBL" id="AY495286">
    <property type="protein sequence ID" value="AAR95051.1"/>
    <property type="molecule type" value="Genomic_DNA"/>
</dbReference>
<dbReference type="EMBL" id="AY495287">
    <property type="protein sequence ID" value="AAR95064.1"/>
    <property type="molecule type" value="Genomic_DNA"/>
</dbReference>
<dbReference type="EMBL" id="AY495288">
    <property type="protein sequence ID" value="AAR95077.1"/>
    <property type="molecule type" value="Genomic_DNA"/>
</dbReference>
<dbReference type="EMBL" id="AY495289">
    <property type="protein sequence ID" value="AAR95090.1"/>
    <property type="molecule type" value="Genomic_DNA"/>
</dbReference>
<dbReference type="EMBL" id="AY495290">
    <property type="protein sequence ID" value="AAR95103.1"/>
    <property type="molecule type" value="Genomic_DNA"/>
</dbReference>
<dbReference type="EMBL" id="AY495291">
    <property type="protein sequence ID" value="AAR95116.1"/>
    <property type="molecule type" value="Genomic_DNA"/>
</dbReference>
<dbReference type="EMBL" id="AY495292">
    <property type="protein sequence ID" value="AAR95129.1"/>
    <property type="molecule type" value="Genomic_DNA"/>
</dbReference>
<dbReference type="EMBL" id="AY495293">
    <property type="protein sequence ID" value="AAR95142.1"/>
    <property type="molecule type" value="Genomic_DNA"/>
</dbReference>
<dbReference type="EMBL" id="AY495294">
    <property type="protein sequence ID" value="AAR95155.1"/>
    <property type="molecule type" value="Genomic_DNA"/>
</dbReference>
<dbReference type="EMBL" id="AY495295">
    <property type="protein sequence ID" value="AAR95168.1"/>
    <property type="molecule type" value="Genomic_DNA"/>
</dbReference>
<dbReference type="EMBL" id="AY495297">
    <property type="protein sequence ID" value="AAR95194.1"/>
    <property type="molecule type" value="Genomic_DNA"/>
</dbReference>
<dbReference type="EMBL" id="AY495298">
    <property type="protein sequence ID" value="AAR95207.1"/>
    <property type="molecule type" value="Genomic_DNA"/>
</dbReference>
<dbReference type="EMBL" id="AY495299">
    <property type="protein sequence ID" value="AAR95220.1"/>
    <property type="molecule type" value="Genomic_DNA"/>
</dbReference>
<dbReference type="EMBL" id="AY495300">
    <property type="protein sequence ID" value="AAR95233.1"/>
    <property type="molecule type" value="Genomic_DNA"/>
</dbReference>
<dbReference type="EMBL" id="AY495301">
    <property type="protein sequence ID" value="AAR95246.1"/>
    <property type="molecule type" value="Genomic_DNA"/>
</dbReference>
<dbReference type="EMBL" id="AY495302">
    <property type="protein sequence ID" value="AAR95259.1"/>
    <property type="molecule type" value="Genomic_DNA"/>
</dbReference>
<dbReference type="EMBL" id="AY495303">
    <property type="protein sequence ID" value="AAR95272.1"/>
    <property type="molecule type" value="Genomic_DNA"/>
</dbReference>
<dbReference type="EMBL" id="AY495304">
    <property type="protein sequence ID" value="AAR95285.1"/>
    <property type="molecule type" value="Genomic_DNA"/>
</dbReference>
<dbReference type="EMBL" id="AY495305">
    <property type="protein sequence ID" value="AAR95298.1"/>
    <property type="molecule type" value="Genomic_DNA"/>
</dbReference>
<dbReference type="EMBL" id="AY495306">
    <property type="protein sequence ID" value="AAR95311.1"/>
    <property type="molecule type" value="Genomic_DNA"/>
</dbReference>
<dbReference type="EMBL" id="AY495307">
    <property type="protein sequence ID" value="AAR95324.1"/>
    <property type="molecule type" value="Genomic_DNA"/>
</dbReference>
<dbReference type="EMBL" id="AY495308">
    <property type="protein sequence ID" value="AAR95337.1"/>
    <property type="molecule type" value="Genomic_DNA"/>
</dbReference>
<dbReference type="EMBL" id="AY495309">
    <property type="protein sequence ID" value="AAR95350.1"/>
    <property type="molecule type" value="Genomic_DNA"/>
</dbReference>
<dbReference type="EMBL" id="AY495310">
    <property type="protein sequence ID" value="AAR95363.1"/>
    <property type="molecule type" value="Genomic_DNA"/>
</dbReference>
<dbReference type="EMBL" id="AY495311">
    <property type="protein sequence ID" value="AAR95376.1"/>
    <property type="molecule type" value="Genomic_DNA"/>
</dbReference>
<dbReference type="EMBL" id="AY495312">
    <property type="protein sequence ID" value="AAR95389.1"/>
    <property type="molecule type" value="Genomic_DNA"/>
</dbReference>
<dbReference type="EMBL" id="AY495313">
    <property type="protein sequence ID" value="AAR95402.1"/>
    <property type="molecule type" value="Genomic_DNA"/>
</dbReference>
<dbReference type="EMBL" id="AY495314">
    <property type="protein sequence ID" value="AAR95415.1"/>
    <property type="molecule type" value="Genomic_DNA"/>
</dbReference>
<dbReference type="EMBL" id="AY495315">
    <property type="protein sequence ID" value="AAR95428.1"/>
    <property type="molecule type" value="Genomic_DNA"/>
</dbReference>
<dbReference type="EMBL" id="AY495316">
    <property type="protein sequence ID" value="AAR95441.1"/>
    <property type="molecule type" value="Genomic_DNA"/>
</dbReference>
<dbReference type="EMBL" id="AY495317">
    <property type="protein sequence ID" value="AAR95454.1"/>
    <property type="molecule type" value="Genomic_DNA"/>
</dbReference>
<dbReference type="EMBL" id="AY495318">
    <property type="protein sequence ID" value="AAR95467.1"/>
    <property type="molecule type" value="Genomic_DNA"/>
</dbReference>
<dbReference type="EMBL" id="AY495319">
    <property type="protein sequence ID" value="AAR95480.1"/>
    <property type="molecule type" value="Genomic_DNA"/>
</dbReference>
<dbReference type="EMBL" id="AY495320">
    <property type="protein sequence ID" value="AAR95493.1"/>
    <property type="molecule type" value="Genomic_DNA"/>
</dbReference>
<dbReference type="EMBL" id="AY495321">
    <property type="protein sequence ID" value="AAR95506.1"/>
    <property type="molecule type" value="Genomic_DNA"/>
</dbReference>
<dbReference type="EMBL" id="AY495322">
    <property type="protein sequence ID" value="AAR95519.1"/>
    <property type="molecule type" value="Genomic_DNA"/>
</dbReference>
<dbReference type="EMBL" id="AY495323">
    <property type="protein sequence ID" value="AAR95532.1"/>
    <property type="molecule type" value="Genomic_DNA"/>
</dbReference>
<dbReference type="EMBL" id="AY495324">
    <property type="protein sequence ID" value="AAR95545.1"/>
    <property type="molecule type" value="Genomic_DNA"/>
</dbReference>
<dbReference type="EMBL" id="AY495325">
    <property type="protein sequence ID" value="AAR95558.1"/>
    <property type="molecule type" value="Genomic_DNA"/>
</dbReference>
<dbReference type="EMBL" id="AY495326">
    <property type="protein sequence ID" value="AAR95571.1"/>
    <property type="molecule type" value="Genomic_DNA"/>
</dbReference>
<dbReference type="EMBL" id="AY495327">
    <property type="protein sequence ID" value="AAR95584.1"/>
    <property type="molecule type" value="Genomic_DNA"/>
</dbReference>
<dbReference type="EMBL" id="AY495328">
    <property type="protein sequence ID" value="AAR95597.1"/>
    <property type="molecule type" value="Genomic_DNA"/>
</dbReference>
<dbReference type="EMBL" id="AY495329">
    <property type="protein sequence ID" value="AAR95610.1"/>
    <property type="molecule type" value="Genomic_DNA"/>
</dbReference>
<dbReference type="EMBL" id="AY495330">
    <property type="protein sequence ID" value="AAR95623.1"/>
    <property type="molecule type" value="Genomic_DNA"/>
</dbReference>
<dbReference type="PIR" id="A00422">
    <property type="entry name" value="DNHUN3"/>
</dbReference>
<dbReference type="RefSeq" id="YP_003024033.1">
    <property type="nucleotide sequence ID" value="NC_012920.1"/>
</dbReference>
<dbReference type="PDB" id="5XTC">
    <property type="method" value="EM"/>
    <property type="resolution" value="3.70 A"/>
    <property type="chains" value="j=1-115"/>
</dbReference>
<dbReference type="PDB" id="5XTD">
    <property type="method" value="EM"/>
    <property type="resolution" value="3.70 A"/>
    <property type="chains" value="j=1-115"/>
</dbReference>
<dbReference type="PDBsum" id="5XTC"/>
<dbReference type="PDBsum" id="5XTD"/>
<dbReference type="SMR" id="P03897"/>
<dbReference type="BioGRID" id="110633">
    <property type="interactions" value="2"/>
</dbReference>
<dbReference type="ComplexPortal" id="CPX-577">
    <property type="entry name" value="Mitochondrial respiratory chain complex I"/>
</dbReference>
<dbReference type="CORUM" id="P03897"/>
<dbReference type="FunCoup" id="P03897">
    <property type="interactions" value="243"/>
</dbReference>
<dbReference type="IntAct" id="P03897">
    <property type="interactions" value="3"/>
</dbReference>
<dbReference type="STRING" id="9606.ENSP00000355206"/>
<dbReference type="BindingDB" id="P03897"/>
<dbReference type="ChEMBL" id="CHEMBL2363065"/>
<dbReference type="DrugBank" id="DB04464">
    <property type="generic name" value="N-Formylmethionine"/>
</dbReference>
<dbReference type="DrugBank" id="DB00157">
    <property type="generic name" value="NADH"/>
</dbReference>
<dbReference type="DrugCentral" id="P03897"/>
<dbReference type="GlyGen" id="P03897">
    <property type="glycosylation" value="1 site, 1 O-linked glycan (1 site)"/>
</dbReference>
<dbReference type="iPTMnet" id="P03897"/>
<dbReference type="PhosphoSitePlus" id="P03897"/>
<dbReference type="BioMuta" id="MT-ND3"/>
<dbReference type="DMDM" id="128710"/>
<dbReference type="jPOST" id="P03897"/>
<dbReference type="MassIVE" id="P03897"/>
<dbReference type="PaxDb" id="9606-ENSP00000355206"/>
<dbReference type="PeptideAtlas" id="P03897"/>
<dbReference type="ProteomicsDB" id="51613"/>
<dbReference type="Pumba" id="P03897"/>
<dbReference type="Antibodypedia" id="68603">
    <property type="antibodies" value="124 antibodies from 24 providers"/>
</dbReference>
<dbReference type="DNASU" id="4537"/>
<dbReference type="Ensembl" id="ENST00000361227.2">
    <property type="protein sequence ID" value="ENSP00000355206.2"/>
    <property type="gene ID" value="ENSG00000198840.2"/>
</dbReference>
<dbReference type="GeneID" id="4537"/>
<dbReference type="KEGG" id="hsa:4537"/>
<dbReference type="AGR" id="HGNC:7458"/>
<dbReference type="CTD" id="4537"/>
<dbReference type="DisGeNET" id="4537"/>
<dbReference type="GeneCards" id="MT-ND3"/>
<dbReference type="GeneReviews" id="MT-ND3"/>
<dbReference type="HGNC" id="HGNC:7458">
    <property type="gene designation" value="MT-ND3"/>
</dbReference>
<dbReference type="HPA" id="ENSG00000198840">
    <property type="expression patterns" value="Tissue enhanced (heart)"/>
</dbReference>
<dbReference type="MalaCards" id="MT-ND3"/>
<dbReference type="MIM" id="256000">
    <property type="type" value="phenotype"/>
</dbReference>
<dbReference type="MIM" id="500014">
    <property type="type" value="phenotype"/>
</dbReference>
<dbReference type="MIM" id="516002">
    <property type="type" value="gene"/>
</dbReference>
<dbReference type="neXtProt" id="NX_P03897"/>
<dbReference type="OpenTargets" id="ENSG00000198840"/>
<dbReference type="Orphanet" id="2609">
    <property type="disease" value="Isolated complex I deficiency"/>
</dbReference>
<dbReference type="Orphanet" id="99718">
    <property type="disease" value="Leber plus disease"/>
</dbReference>
<dbReference type="Orphanet" id="255210">
    <property type="disease" value="Mitochondrial DNA-associated Leigh syndrome"/>
</dbReference>
<dbReference type="VEuPathDB" id="HostDB:ENSG00000198840"/>
<dbReference type="eggNOG" id="KOG4662">
    <property type="taxonomic scope" value="Eukaryota"/>
</dbReference>
<dbReference type="GeneTree" id="ENSGT00390000011605"/>
<dbReference type="HOGENOM" id="CLU_119549_3_1_1"/>
<dbReference type="InParanoid" id="P03897"/>
<dbReference type="OMA" id="GPRRYNR"/>
<dbReference type="PAN-GO" id="P03897">
    <property type="GO annotations" value="2 GO annotations based on evolutionary models"/>
</dbReference>
<dbReference type="PhylomeDB" id="P03897"/>
<dbReference type="TreeFam" id="TF343336"/>
<dbReference type="BioCyc" id="MetaCyc:HS00032-MONOMER"/>
<dbReference type="PathwayCommons" id="P03897"/>
<dbReference type="Reactome" id="R-HSA-611105">
    <property type="pathway name" value="Respiratory electron transport"/>
</dbReference>
<dbReference type="Reactome" id="R-HSA-6799198">
    <property type="pathway name" value="Complex I biogenesis"/>
</dbReference>
<dbReference type="SignaLink" id="P03897"/>
<dbReference type="SIGNOR" id="P03897"/>
<dbReference type="BioGRID-ORCS" id="4537">
    <property type="hits" value="0 hits in 3 CRISPR screens"/>
</dbReference>
<dbReference type="ChiTaRS" id="ND3">
    <property type="organism name" value="human"/>
</dbReference>
<dbReference type="GeneWiki" id="MT-ND3"/>
<dbReference type="GenomeRNAi" id="4537"/>
<dbReference type="Pharos" id="P03897">
    <property type="development level" value="Tclin"/>
</dbReference>
<dbReference type="PRO" id="PR:P03897"/>
<dbReference type="Proteomes" id="UP000005640">
    <property type="component" value="Mitochondrion MT"/>
</dbReference>
<dbReference type="RNAct" id="P03897">
    <property type="molecule type" value="protein"/>
</dbReference>
<dbReference type="Bgee" id="ENSG00000198840">
    <property type="expression patterns" value="Expressed in right uterine tube and 95 other cell types or tissues"/>
</dbReference>
<dbReference type="ExpressionAtlas" id="P03897">
    <property type="expression patterns" value="baseline and differential"/>
</dbReference>
<dbReference type="GO" id="GO:0005743">
    <property type="term" value="C:mitochondrial inner membrane"/>
    <property type="evidence" value="ECO:0000314"/>
    <property type="project" value="ComplexPortal"/>
</dbReference>
<dbReference type="GO" id="GO:0005739">
    <property type="term" value="C:mitochondrion"/>
    <property type="evidence" value="ECO:0006056"/>
    <property type="project" value="FlyBase"/>
</dbReference>
<dbReference type="GO" id="GO:0045271">
    <property type="term" value="C:respiratory chain complex I"/>
    <property type="evidence" value="ECO:0000314"/>
    <property type="project" value="UniProtKB"/>
</dbReference>
<dbReference type="GO" id="GO:0008137">
    <property type="term" value="F:NADH dehydrogenase (ubiquinone) activity"/>
    <property type="evidence" value="ECO:0000315"/>
    <property type="project" value="UniProtKB"/>
</dbReference>
<dbReference type="GO" id="GO:0009060">
    <property type="term" value="P:aerobic respiration"/>
    <property type="evidence" value="ECO:0000303"/>
    <property type="project" value="ComplexPortal"/>
</dbReference>
<dbReference type="GO" id="GO:0071385">
    <property type="term" value="P:cellular response to glucocorticoid stimulus"/>
    <property type="evidence" value="ECO:0007669"/>
    <property type="project" value="Ensembl"/>
</dbReference>
<dbReference type="GO" id="GO:0006120">
    <property type="term" value="P:mitochondrial electron transport, NADH to ubiquinone"/>
    <property type="evidence" value="ECO:0000315"/>
    <property type="project" value="UniProtKB"/>
</dbReference>
<dbReference type="GO" id="GO:0042776">
    <property type="term" value="P:proton motive force-driven mitochondrial ATP synthesis"/>
    <property type="evidence" value="ECO:0000303"/>
    <property type="project" value="ComplexPortal"/>
</dbReference>
<dbReference type="GO" id="GO:0009642">
    <property type="term" value="P:response to light intensity"/>
    <property type="evidence" value="ECO:0007669"/>
    <property type="project" value="Ensembl"/>
</dbReference>
<dbReference type="GO" id="GO:0006979">
    <property type="term" value="P:response to oxidative stress"/>
    <property type="evidence" value="ECO:0007669"/>
    <property type="project" value="Ensembl"/>
</dbReference>
<dbReference type="FunFam" id="1.20.58.1610:FF:000004">
    <property type="entry name" value="NADH-quinone oxidoreductase subunit A"/>
    <property type="match status" value="1"/>
</dbReference>
<dbReference type="Gene3D" id="1.20.58.1610">
    <property type="entry name" value="NADH:ubiquinone/plastoquinone oxidoreductase, chain 3"/>
    <property type="match status" value="1"/>
</dbReference>
<dbReference type="InterPro" id="IPR000440">
    <property type="entry name" value="NADH_UbQ/plastoQ_OxRdtase_su3"/>
</dbReference>
<dbReference type="InterPro" id="IPR038430">
    <property type="entry name" value="NDAH_ubi_oxred_su3_sf"/>
</dbReference>
<dbReference type="PANTHER" id="PTHR11058">
    <property type="entry name" value="NADH-UBIQUINONE OXIDOREDUCTASE CHAIN 3"/>
    <property type="match status" value="1"/>
</dbReference>
<dbReference type="PANTHER" id="PTHR11058:SF9">
    <property type="entry name" value="NADH-UBIQUINONE OXIDOREDUCTASE CHAIN 3"/>
    <property type="match status" value="1"/>
</dbReference>
<dbReference type="Pfam" id="PF00507">
    <property type="entry name" value="Oxidored_q4"/>
    <property type="match status" value="1"/>
</dbReference>
<comment type="function">
    <text evidence="9">Core subunit of the mitochondrial membrane respiratory chain NADH dehydrogenase (Complex I) which catalyzes electron transfer from NADH through the respiratory chain, using ubiquinone as an electron acceptor (PubMed:25118196). Essential for the catalytic activity of complex I (PubMed:25118196).</text>
</comment>
<comment type="catalytic activity">
    <reaction evidence="9">
        <text>a ubiquinone + NADH + 5 H(+)(in) = a ubiquinol + NAD(+) + 4 H(+)(out)</text>
        <dbReference type="Rhea" id="RHEA:29091"/>
        <dbReference type="Rhea" id="RHEA-COMP:9565"/>
        <dbReference type="Rhea" id="RHEA-COMP:9566"/>
        <dbReference type="ChEBI" id="CHEBI:15378"/>
        <dbReference type="ChEBI" id="CHEBI:16389"/>
        <dbReference type="ChEBI" id="CHEBI:17976"/>
        <dbReference type="ChEBI" id="CHEBI:57540"/>
        <dbReference type="ChEBI" id="CHEBI:57945"/>
        <dbReference type="EC" id="7.1.1.2"/>
    </reaction>
</comment>
<comment type="subunit">
    <text evidence="4 10 11">Core subunit of respiratory chain NADH dehydrogenase (Complex I) which is composed of 45 different subunits (PubMed:12611891). Interacts with TMEM186 (PubMed:32320651). Interacts with TMEM242 (PubMed:33753518).</text>
</comment>
<comment type="interaction">
    <interactant intactId="EBI-1246249">
        <id>P03897</id>
    </interactant>
    <interactant intactId="EBI-821758">
        <id>PRO_0000000092</id>
        <label>APP</label>
        <dbReference type="UniProtKB" id="P05067"/>
    </interactant>
    <organismsDiffer>false</organismsDiffer>
    <experiments>2</experiments>
</comment>
<comment type="subcellular location">
    <subcellularLocation>
        <location evidence="1">Mitochondrion inner membrane</location>
        <topology evidence="2">Multi-pass membrane protein</topology>
    </subcellularLocation>
</comment>
<comment type="disease" evidence="6 9">
    <disease id="DI-01886">
        <name>Leigh syndrome</name>
        <acronym>LS</acronym>
        <description>An early-onset progressive neurodegenerative disorder characterized by the presence of focal, bilateral lesions in one or more areas of the central nervous system including the brainstem, thalamus, basal ganglia, cerebellum and spinal cord. Clinical features depend on which areas of the central nervous system are involved and include subacute onset of psychomotor retardation, hypotonia, ataxia, weakness, vision loss, eye movement abnormalities, seizures, and dysphagia.</description>
        <dbReference type="MIM" id="256000"/>
    </disease>
    <text>The disease is caused by variants affecting the gene represented in this entry.</text>
</comment>
<comment type="disease" evidence="3 5 8">
    <disease id="DI-05429">
        <name>Mitochondrial complex I deficiency, mitochondrial type 1</name>
        <acronym>MC1DM1</acronym>
        <description>A form of mitochondrial complex I deficiency, the most common biochemical signature of mitochondrial disorders, a group of highly heterogeneous conditions characterized by defective oxidative phosphorylation, which collectively affects 1 in 5-10000 live births. Clinical disorders have variable severity, ranging from lethal neonatal disease to adult-onset neurodegenerative disorders. Phenotypes include macrocephaly with progressive leukodystrophy, non-specific encephalopathy, cardiomyopathy, myopathy, liver disease, Leigh syndrome, Leber hereditary optic neuropathy, and some forms of Parkinson disease.</description>
        <dbReference type="MIM" id="500014"/>
    </disease>
    <text>The disease is caused by variants affecting the gene represented in this entry.</text>
</comment>
<comment type="similarity">
    <text evidence="13">Belongs to the complex I subunit 3 family.</text>
</comment>
<reference key="1">
    <citation type="journal article" date="1981" name="Nature">
        <title>Sequence and organization of the human mitochondrial genome.</title>
        <authorList>
            <person name="Anderson S."/>
            <person name="Bankier A.T."/>
            <person name="Barrell B.G."/>
            <person name="de Bruijn M.H.L."/>
            <person name="Coulson A.R."/>
            <person name="Drouin J."/>
            <person name="Eperon I.C."/>
            <person name="Nierlich D.P."/>
            <person name="Roe B.A."/>
            <person name="Sanger F."/>
            <person name="Schreier P.H."/>
            <person name="Smith A.J.H."/>
            <person name="Staden R."/>
            <person name="Young I.G."/>
        </authorList>
    </citation>
    <scope>NUCLEOTIDE SEQUENCE [LARGE SCALE GENOMIC DNA]</scope>
</reference>
<reference key="2">
    <citation type="journal article" date="2003" name="Mol. Biol. Evol.">
        <title>Lineage-specific selection in human mtDNA: lack of polymorphisms in a segment of MTND5 gene in haplogroup J.</title>
        <authorList>
            <person name="Moilanen J.S."/>
            <person name="Finnila S."/>
            <person name="Majamaa K."/>
        </authorList>
    </citation>
    <scope>NUCLEOTIDE SEQUENCE [GENOMIC DNA]</scope>
</reference>
<reference key="3">
    <citation type="journal article" date="2000" name="Nature">
        <title>Mitochondrial genome variation and the origin of modern humans.</title>
        <authorList>
            <person name="Ingman M."/>
            <person name="Kaessmann H."/>
            <person name="Paeaebo S."/>
            <person name="Gyllensten U."/>
        </authorList>
    </citation>
    <scope>NUCLEOTIDE SEQUENCE [GENOMIC DNA]</scope>
</reference>
<reference key="4">
    <citation type="journal article" date="2003" name="Genome Res.">
        <title>Mitochondrial genome variation and evolutionary history of Australian and New Guinean aborigines.</title>
        <authorList>
            <person name="Ingman M."/>
            <person name="Gyllensten U."/>
        </authorList>
    </citation>
    <scope>NUCLEOTIDE SEQUENCE [GENOMIC DNA]</scope>
</reference>
<reference key="5">
    <citation type="journal article" date="2004" name="Int. J. Legal Med.">
        <title>Single nucleotide polymorphisms over the entire mtDNA genome that increase the power of forensic testing in Caucasians.</title>
        <authorList>
            <person name="Coble M.D."/>
            <person name="Just R.S."/>
            <person name="O'Callaghan J.E."/>
            <person name="Letmanyi I.H."/>
            <person name="Peterson C.T."/>
            <person name="Irwin J.A."/>
            <person name="Parsons T.J."/>
        </authorList>
    </citation>
    <scope>NUCLEOTIDE SEQUENCE [GENOMIC DNA]</scope>
</reference>
<reference key="6">
    <citation type="journal article" date="1985" name="Nature">
        <title>Six unidentified reading frames of human mitochondrial DNA encode components of the respiratory-chain NADH dehydrogenase.</title>
        <authorList>
            <person name="Chomyn A."/>
            <person name="Mariottini P."/>
            <person name="Cleeter M.W.J."/>
            <person name="Ragan C.I."/>
            <person name="Matsuno-Yagi A."/>
            <person name="Hatefi Y."/>
            <person name="Doolittle R.F."/>
            <person name="Attardi G."/>
        </authorList>
    </citation>
    <scope>IDENTIFICATION OF PROTEIN</scope>
</reference>
<reference key="7">
    <citation type="journal article" date="2003" name="J. Biol. Chem.">
        <title>The subunit composition of the human NADH dehydrogenase obtained by rapid one-step immunopurification.</title>
        <authorList>
            <person name="Murray J."/>
            <person name="Zhang B."/>
            <person name="Taylor S.W."/>
            <person name="Oglesbee D."/>
            <person name="Fahy E."/>
            <person name="Marusich M.F."/>
            <person name="Ghosh S.S."/>
            <person name="Capaldi R.A."/>
        </authorList>
    </citation>
    <scope>IDENTIFICATION IN THE NADH-UBIQUINONE OXIDOREDUCTASE COMPLEX</scope>
    <scope>IDENTIFICATION BY MASS SPECTROMETRY</scope>
</reference>
<reference key="8">
    <citation type="journal article" date="2011" name="BMC Syst. Biol.">
        <title>Initial characterization of the human central proteome.</title>
        <authorList>
            <person name="Burkard T.R."/>
            <person name="Planyavsky M."/>
            <person name="Kaupe I."/>
            <person name="Breitwieser F.P."/>
            <person name="Buerckstuemmer T."/>
            <person name="Bennett K.L."/>
            <person name="Superti-Furga G."/>
            <person name="Colinge J."/>
        </authorList>
    </citation>
    <scope>IDENTIFICATION BY MASS SPECTROMETRY [LARGE SCALE ANALYSIS]</scope>
</reference>
<reference key="9">
    <citation type="journal article" date="2020" name="Cell Rep.">
        <title>Dissecting the Roles of Mitochondrial Complex I Intermediate Assembly Complex Factors in the Biogenesis of Complex I.</title>
        <authorList>
            <person name="Formosa L.E."/>
            <person name="Muellner-Wong L."/>
            <person name="Reljic B."/>
            <person name="Sharpe A.J."/>
            <person name="Jackson T.D."/>
            <person name="Beilharz T.H."/>
            <person name="Stojanovski D."/>
            <person name="Lazarou M."/>
            <person name="Stroud D.A."/>
            <person name="Ryan M.T."/>
        </authorList>
    </citation>
    <scope>INTERACTION WITH TMEM186</scope>
</reference>
<reference key="10">
    <citation type="journal article" date="2021" name="Proc. Natl. Acad. Sci. U.S.A.">
        <title>TMEM70 and TMEM242 help to assemble the rotor ring of human ATP synthase and interact with assembly factors for complex I.</title>
        <authorList>
            <person name="Carroll J."/>
            <person name="He J."/>
            <person name="Ding S."/>
            <person name="Fearnley I.M."/>
            <person name="Walker J.E."/>
        </authorList>
    </citation>
    <scope>INTERACTION WITH TMEM242</scope>
</reference>
<reference key="11">
    <citation type="journal article" date="1983" name="J. Biol. Chem.">
        <title>Assignment of a polymorphic polypeptide to the human mitochondrial DNA unidentified reading frame 3 gene by a new peptide mapping strategy.</title>
        <authorList>
            <person name="Oliver N.A."/>
            <person name="Greenberg B.D."/>
            <person name="Wallace D.C."/>
        </authorList>
    </citation>
    <scope>VARIANTS ASP-10 AND ALA-114</scope>
</reference>
<reference key="12">
    <citation type="journal article" date="1991" name="Hum. Genet.">
        <title>Normal variants of human mitochondrial DNA and translation products: the building of a reference data base.</title>
        <authorList>
            <person name="Marzuki S."/>
            <person name="Noer A.S."/>
            <person name="Lertrit P."/>
            <person name="Thyagarajan D."/>
            <person name="Kapsa R."/>
            <person name="Utthanaphol P."/>
            <person name="Byrne E."/>
        </authorList>
    </citation>
    <scope>VARIANTS VAL-53 AND ALA-114</scope>
</reference>
<reference key="13">
    <citation type="journal article" date="2001" name="Ann. Neurol.">
        <title>Progressive mitochondrial disease resulting from a novel missense mutation in the mitochondrial DNA ND3 gene.</title>
        <authorList>
            <person name="Taylor R.W."/>
            <person name="Singh-Kler R."/>
            <person name="Hayes C.M."/>
            <person name="Smith P.E."/>
            <person name="Turnbull D.M."/>
        </authorList>
    </citation>
    <scope>VARIANT MC1DM1 PRO-45</scope>
</reference>
<reference key="14">
    <citation type="journal article" date="2004" name="Ann. Neurol.">
        <title>De novo mutations in the mitochondrial ND3 gene as a cause of infantile mitochondrial encephalopathy and complex I deficiency.</title>
        <authorList>
            <person name="McFarland R."/>
            <person name="Kirby D.M."/>
            <person name="Fowler K.J."/>
            <person name="Ohtake A."/>
            <person name="Ryan M.T."/>
            <person name="Amor D.J."/>
            <person name="Fletcher J.M."/>
            <person name="Dixon J.W."/>
            <person name="Collins F.A."/>
            <person name="Turnbull D.M."/>
            <person name="Taylor R.W."/>
            <person name="Thorburn D.R."/>
        </authorList>
    </citation>
    <scope>VARIANT MC1DM1 PRO-34</scope>
</reference>
<reference key="15">
    <citation type="journal article" date="2007" name="Am. J. Med. Genet. A">
        <title>A novel recurrent mitochondrial DNA mutation in ND3 gene is associated with isolated complex I deficiency causing Leigh syndrome and dystonia.</title>
        <authorList>
            <person name="Sarzi E."/>
            <person name="Brown M.D."/>
            <person name="Lebon S."/>
            <person name="Chretien D."/>
            <person name="Munnich A."/>
            <person name="Rotig A."/>
            <person name="Procaccio V."/>
        </authorList>
    </citation>
    <scope>VARIANT LS THR-47</scope>
</reference>
<reference key="16">
    <citation type="journal article" date="2010" name="Nat. Genet.">
        <title>High-throughput, pooled sequencing identifies mutations in NUBPL and FOXRED1 in human complex I deficiency.</title>
        <authorList>
            <person name="Calvo S.E."/>
            <person name="Tucker E.J."/>
            <person name="Compton A.G."/>
            <person name="Kirby D.M."/>
            <person name="Crawford G."/>
            <person name="Burtt N.P."/>
            <person name="Rivas M."/>
            <person name="Guiducci C."/>
            <person name="Bruno D.L."/>
            <person name="Goldberger O.A."/>
            <person name="Redman M.C."/>
            <person name="Wiltshire E."/>
            <person name="Wilson C.J."/>
            <person name="Altshuler D."/>
            <person name="Gabriel S.B."/>
            <person name="Daly M.J."/>
            <person name="Thorburn D.R."/>
            <person name="Mootha V.K."/>
        </authorList>
    </citation>
    <scope>VARIANTS MC1DM1 PRO-34; PRO-45 AND THR-47</scope>
</reference>
<reference key="17">
    <citation type="journal article" date="2014" name="PLoS ONE">
        <title>Rapid identification of a novel complex I MT-ND3 m.10134C&gt;A mutation in a Leigh syndrome patient.</title>
        <authorList>
            <person name="Miller D.K."/>
            <person name="Menezes M.J."/>
            <person name="Simons C."/>
            <person name="Riley L.G."/>
            <person name="Cooper S.T."/>
            <person name="Grimmond S.M."/>
            <person name="Thorburn D.R."/>
            <person name="Christodoulou J."/>
            <person name="Taft R.J."/>
        </authorList>
    </citation>
    <scope>VARIANT LS LYS-26</scope>
    <scope>CHARACTERIZATION OF VARIANT LS LYS-26</scope>
    <scope>FUNCTION</scope>
    <scope>CATALYTIC ACTIVITY</scope>
</reference>
<keyword id="KW-0002">3D-structure</keyword>
<keyword id="KW-0225">Disease variant</keyword>
<keyword id="KW-0249">Electron transport</keyword>
<keyword id="KW-0431">Leigh syndrome</keyword>
<keyword id="KW-0472">Membrane</keyword>
<keyword id="KW-0496">Mitochondrion</keyword>
<keyword id="KW-0999">Mitochondrion inner membrane</keyword>
<keyword id="KW-0520">NAD</keyword>
<keyword id="KW-1274">Primary mitochondrial disease</keyword>
<keyword id="KW-1267">Proteomics identification</keyword>
<keyword id="KW-1185">Reference proteome</keyword>
<keyword id="KW-0679">Respiratory chain</keyword>
<keyword id="KW-1278">Translocase</keyword>
<keyword id="KW-0812">Transmembrane</keyword>
<keyword id="KW-1133">Transmembrane helix</keyword>
<keyword id="KW-0813">Transport</keyword>
<keyword id="KW-0830">Ubiquinone</keyword>
<name>NU3M_HUMAN</name>
<protein>
    <recommendedName>
        <fullName evidence="13">NADH-ubiquinone oxidoreductase chain 3</fullName>
        <ecNumber evidence="9">7.1.1.2</ecNumber>
    </recommendedName>
    <alternativeName>
        <fullName>NADH dehydrogenase subunit 3</fullName>
    </alternativeName>
</protein>
<gene>
    <name evidence="14" type="primary">MT-ND3</name>
    <name type="synonym">MTND3</name>
    <name type="synonym">NADH3</name>
    <name type="synonym">ND3</name>
</gene>
<feature type="chain" id="PRO_0000117752" description="NADH-ubiquinone oxidoreductase chain 3">
    <location>
        <begin position="1"/>
        <end position="115"/>
    </location>
</feature>
<feature type="transmembrane region" description="Helical" evidence="2">
    <location>
        <begin position="3"/>
        <end position="23"/>
    </location>
</feature>
<feature type="transmembrane region" description="Helical" evidence="2">
    <location>
        <begin position="55"/>
        <end position="75"/>
    </location>
</feature>
<feature type="transmembrane region" description="Helical" evidence="2">
    <location>
        <begin position="84"/>
        <end position="104"/>
    </location>
</feature>
<feature type="sequence variant" id="VAR_008391" description="In dbSNP:rs28358274." evidence="12">
    <original>N</original>
    <variation>D</variation>
    <location>
        <position position="10"/>
    </location>
</feature>
<feature type="sequence variant" id="VAR_084384" description="In LS; uncertain significance; decrease in enzyme activity; dbSNP:rs587780529." evidence="9">
    <original>Q</original>
    <variation>K</variation>
    <location>
        <position position="26"/>
    </location>
</feature>
<feature type="sequence variant" id="VAR_064564" description="In MC1DM1; dbSNP:rs199476117." evidence="5 8">
    <original>S</original>
    <variation>P</variation>
    <location>
        <position position="34"/>
    </location>
</feature>
<feature type="sequence variant" id="VAR_035091" description="In MC1DM1; dbSNP:rs267606890." evidence="3 8">
    <original>S</original>
    <variation>P</variation>
    <location>
        <position position="45"/>
    </location>
</feature>
<feature type="sequence variant" id="VAR_035092" description="In LS and MC1DM1; dbSNP:rs267606891." evidence="6 8">
    <original>A</original>
    <variation>T</variation>
    <location>
        <position position="47"/>
    </location>
</feature>
<feature type="sequence variant" id="VAR_008598" evidence="7">
    <original>M</original>
    <variation>V</variation>
    <location>
        <position position="53"/>
    </location>
</feature>
<feature type="sequence variant" id="VAR_008392" description="In dbSNP:rs2853826." evidence="7 12">
    <original>T</original>
    <variation>A</variation>
    <location>
        <position position="114"/>
    </location>
</feature>
<evidence type="ECO:0000250" key="1">
    <source>
        <dbReference type="UniProtKB" id="P03898"/>
    </source>
</evidence>
<evidence type="ECO:0000255" key="2"/>
<evidence type="ECO:0000269" key="3">
    <source>
    </source>
</evidence>
<evidence type="ECO:0000269" key="4">
    <source>
    </source>
</evidence>
<evidence type="ECO:0000269" key="5">
    <source>
    </source>
</evidence>
<evidence type="ECO:0000269" key="6">
    <source>
    </source>
</evidence>
<evidence type="ECO:0000269" key="7">
    <source>
    </source>
</evidence>
<evidence type="ECO:0000269" key="8">
    <source>
    </source>
</evidence>
<evidence type="ECO:0000269" key="9">
    <source>
    </source>
</evidence>
<evidence type="ECO:0000269" key="10">
    <source>
    </source>
</evidence>
<evidence type="ECO:0000269" key="11">
    <source>
    </source>
</evidence>
<evidence type="ECO:0000269" key="12">
    <source>
    </source>
</evidence>
<evidence type="ECO:0000305" key="13"/>
<evidence type="ECO:0000312" key="14">
    <source>
        <dbReference type="HGNC" id="HGNC:7458"/>
    </source>
</evidence>